<feature type="signal peptide" evidence="2">
    <location>
        <begin position="1"/>
        <end position="24"/>
    </location>
</feature>
<feature type="chain" id="PRO_0000032946" description="Prolactin">
    <location>
        <begin position="25"/>
        <end position="211"/>
    </location>
</feature>
<feature type="disulfide bond" evidence="1">
    <location>
        <begin position="70"/>
        <end position="184"/>
    </location>
</feature>
<feature type="disulfide bond" evidence="1">
    <location>
        <begin position="201"/>
        <end position="211"/>
    </location>
</feature>
<name>PRL_PAROL</name>
<evidence type="ECO:0000250" key="1"/>
<evidence type="ECO:0000255" key="2"/>
<evidence type="ECO:0000305" key="3"/>
<gene>
    <name type="primary">prl</name>
</gene>
<accession>Q9YGV6</accession>
<sequence length="211" mass="23340">MTHRRTKLFMMAAVVSYVMTSCGAVPINDLLDRASQRSDQLHSLSTTLSQELDSHFPPIGRVIMPRPSMCHTSALQTPNDKTQALQVSESELLSLARSLLQAWADPLSALSSSAFSLPHPAQSSIFNKVREMQEHSKNLGDGLDILSGKMGEAAQALSSLPFRGNDVGQDRISKLINFHFLLSCFRRDSHKIDSFLKVLRCRAANTQPEMC</sequence>
<reference key="1">
    <citation type="submission" date="1998-02" db="EMBL/GenBank/DDBJ databases">
        <title>Flounder prolactin.</title>
        <authorList>
            <person name="Kim Y.T."/>
            <person name="Lee S.Y."/>
        </authorList>
    </citation>
    <scope>NUCLEOTIDE SEQUENCE [MRNA]</scope>
</reference>
<proteinExistence type="evidence at transcript level"/>
<organism>
    <name type="scientific">Paralichthys olivaceus</name>
    <name type="common">Bastard halibut</name>
    <name type="synonym">Hippoglossus olivaceus</name>
    <dbReference type="NCBI Taxonomy" id="8255"/>
    <lineage>
        <taxon>Eukaryota</taxon>
        <taxon>Metazoa</taxon>
        <taxon>Chordata</taxon>
        <taxon>Craniata</taxon>
        <taxon>Vertebrata</taxon>
        <taxon>Euteleostomi</taxon>
        <taxon>Actinopterygii</taxon>
        <taxon>Neopterygii</taxon>
        <taxon>Teleostei</taxon>
        <taxon>Neoteleostei</taxon>
        <taxon>Acanthomorphata</taxon>
        <taxon>Carangaria</taxon>
        <taxon>Pleuronectiformes</taxon>
        <taxon>Pleuronectoidei</taxon>
        <taxon>Paralichthyidae</taxon>
        <taxon>Paralichthys</taxon>
    </lineage>
</organism>
<comment type="subcellular location">
    <subcellularLocation>
        <location>Secreted</location>
    </subcellularLocation>
</comment>
<comment type="similarity">
    <text evidence="3">Belongs to the somatotropin/prolactin family.</text>
</comment>
<keyword id="KW-1015">Disulfide bond</keyword>
<keyword id="KW-0372">Hormone</keyword>
<keyword id="KW-0964">Secreted</keyword>
<keyword id="KW-0732">Signal</keyword>
<dbReference type="EMBL" id="AF047616">
    <property type="protein sequence ID" value="AAD15746.1"/>
    <property type="molecule type" value="mRNA"/>
</dbReference>
<dbReference type="RefSeq" id="XP_019966165.1">
    <property type="nucleotide sequence ID" value="XM_020110606.2"/>
</dbReference>
<dbReference type="SMR" id="Q9YGV6"/>
<dbReference type="GeneID" id="109645096"/>
<dbReference type="KEGG" id="pov:109645096"/>
<dbReference type="CTD" id="5617"/>
<dbReference type="OrthoDB" id="559463at7898"/>
<dbReference type="GO" id="GO:0005615">
    <property type="term" value="C:extracellular space"/>
    <property type="evidence" value="ECO:0007669"/>
    <property type="project" value="TreeGrafter"/>
</dbReference>
<dbReference type="GO" id="GO:0005179">
    <property type="term" value="F:hormone activity"/>
    <property type="evidence" value="ECO:0007669"/>
    <property type="project" value="UniProtKB-KW"/>
</dbReference>
<dbReference type="GO" id="GO:0008284">
    <property type="term" value="P:positive regulation of cell population proliferation"/>
    <property type="evidence" value="ECO:0007669"/>
    <property type="project" value="TreeGrafter"/>
</dbReference>
<dbReference type="GO" id="GO:0046427">
    <property type="term" value="P:positive regulation of receptor signaling pathway via JAK-STAT"/>
    <property type="evidence" value="ECO:0007669"/>
    <property type="project" value="TreeGrafter"/>
</dbReference>
<dbReference type="GO" id="GO:0031667">
    <property type="term" value="P:response to nutrient levels"/>
    <property type="evidence" value="ECO:0007669"/>
    <property type="project" value="TreeGrafter"/>
</dbReference>
<dbReference type="Gene3D" id="1.20.1250.10">
    <property type="match status" value="1"/>
</dbReference>
<dbReference type="InterPro" id="IPR009079">
    <property type="entry name" value="4_helix_cytokine-like_core"/>
</dbReference>
<dbReference type="InterPro" id="IPR001400">
    <property type="entry name" value="Somatotropin/Prolactin"/>
</dbReference>
<dbReference type="InterPro" id="IPR018116">
    <property type="entry name" value="Somatotropin_CS"/>
</dbReference>
<dbReference type="PANTHER" id="PTHR11417:SF5">
    <property type="entry name" value="PROLACTIN"/>
    <property type="match status" value="1"/>
</dbReference>
<dbReference type="PANTHER" id="PTHR11417">
    <property type="entry name" value="SOMATOTROPIN,PROLACTIN"/>
    <property type="match status" value="1"/>
</dbReference>
<dbReference type="Pfam" id="PF00103">
    <property type="entry name" value="Hormone_1"/>
    <property type="match status" value="1"/>
</dbReference>
<dbReference type="PRINTS" id="PR00836">
    <property type="entry name" value="SOMATOTROPIN"/>
</dbReference>
<dbReference type="SUPFAM" id="SSF47266">
    <property type="entry name" value="4-helical cytokines"/>
    <property type="match status" value="1"/>
</dbReference>
<dbReference type="PROSITE" id="PS00266">
    <property type="entry name" value="SOMATOTROPIN_1"/>
    <property type="match status" value="1"/>
</dbReference>
<dbReference type="PROSITE" id="PS00338">
    <property type="entry name" value="SOMATOTROPIN_2"/>
    <property type="match status" value="1"/>
</dbReference>
<protein>
    <recommendedName>
        <fullName>Prolactin</fullName>
        <shortName>PRL</shortName>
    </recommendedName>
</protein>